<sequence>MEKLAAGLAGLRWSMGAFPLDLIVSRCRLPTLACLGPGEYAEGVSERDILLIHSCRQWTTVTAHTLEEGHYVIGPKIDIPLQYPGKFKLLEQARDVREPVRYFSSVEEVASVFPDRIFVMEAITFSVKVVSGEFSEDSEVYNFTLHAGDELTLMGQAEILCAKTTKERSRFTTLLRKLGRAGALAGIGGPGSMGATGGGGGAARPVKSKMPCLICMNHRTNESLSLPFQCQGRFSTRSPLELQMQEGEHTVRAIIERVRLPVNVLVPSRPPRNPYDLHPVREGHCYKLVSIISKTVVLGLALRREGPAPLHFLLLTDTPRFTLPQGLLAGDPRVERLVRDSASYCRERFDPDEYSTAVREAPAELSDDCASPRHARLCLPAPRAPGAVRAPGPPGRLGPALPAPGDSDQDYVSPDWAGVSEPAGGCAEIPYEELWVHQAPESRADARARPLAGPDLISFGIVGPPRHEPEAPPPPVPPKSEAVKEECRLLHAPPVPPRGGGSCSKLTGSPPVLPHFPKLQPVHSPSSSLSYYSSGLQDGAGSRSGSGSPSPDAYSLYCYPCTWGDCKASESSSRPPPGPLPSTTTQPSQASRGLSEPLSGRTPSLLGADTPVVKNYHSCPPLFKSSRPQKSFAPFGALNPFSGPAHPSGAPAASSSGSISTSGVLATSSPTHSPGPGPGPQGQGYSAAPSSSLSSSEWQEPALEPLDPFELGQASPPELELVRCQEPRAAGAPGSGPCLSPLGQPKAFEPEGLVLRQVPASLSPAALQGPEAGGTLLFLTQGCLEGPPGSPREGATGAGVRDASSWQPPADLSALSLEEVSRSLRFIGLSEDVVSFFARERIDGSIFVQLSEDILADDFHLTKLQVKKIMQFIKGWRPKI</sequence>
<comment type="function">
    <text evidence="1">Probable adapter protein that provides a critical link between cell surface epidermal growth factor receptor and the MAPK/ERK signaling pathway.</text>
</comment>
<comment type="alternative products">
    <event type="alternative splicing"/>
    <isoform>
        <id>Q6PAJ3-1</id>
        <name>1</name>
        <sequence type="displayed"/>
    </isoform>
    <isoform>
        <id>Q6PAJ3-2</id>
        <name>2</name>
        <sequence type="described" ref="VSP_034202 VSP_034203 VSP_034204"/>
    </isoform>
</comment>
<comment type="similarity">
    <text evidence="5">Belongs to the GAREM family.</text>
</comment>
<evidence type="ECO:0000250" key="1"/>
<evidence type="ECO:0000250" key="2">
    <source>
        <dbReference type="UniProtKB" id="Q75VX8"/>
    </source>
</evidence>
<evidence type="ECO:0000256" key="3">
    <source>
        <dbReference type="SAM" id="MobiDB-lite"/>
    </source>
</evidence>
<evidence type="ECO:0000303" key="4">
    <source>
    </source>
</evidence>
<evidence type="ECO:0000305" key="5"/>
<keyword id="KW-0025">Alternative splicing</keyword>
<keyword id="KW-0597">Phosphoprotein</keyword>
<keyword id="KW-1185">Reference proteome</keyword>
<feature type="chain" id="PRO_0000340254" description="GRB2-associated and regulator of MAPK protein 2">
    <location>
        <begin position="1"/>
        <end position="880"/>
    </location>
</feature>
<feature type="domain" description="SAM">
    <location>
        <begin position="813"/>
        <end position="877"/>
    </location>
</feature>
<feature type="region of interest" description="CABIT">
    <location>
        <begin position="12"/>
        <end position="320"/>
    </location>
</feature>
<feature type="region of interest" description="Disordered" evidence="3">
    <location>
        <begin position="385"/>
        <end position="407"/>
    </location>
</feature>
<feature type="region of interest" description="Disordered" evidence="3">
    <location>
        <begin position="461"/>
        <end position="483"/>
    </location>
</feature>
<feature type="region of interest" description="Disordered" evidence="3">
    <location>
        <begin position="527"/>
        <end position="548"/>
    </location>
</feature>
<feature type="region of interest" description="Disordered" evidence="3">
    <location>
        <begin position="569"/>
        <end position="611"/>
    </location>
</feature>
<feature type="region of interest" description="Disordered" evidence="3">
    <location>
        <begin position="633"/>
        <end position="713"/>
    </location>
</feature>
<feature type="compositionally biased region" description="Low complexity" evidence="3">
    <location>
        <begin position="640"/>
        <end position="663"/>
    </location>
</feature>
<feature type="compositionally biased region" description="Low complexity" evidence="3">
    <location>
        <begin position="683"/>
        <end position="696"/>
    </location>
</feature>
<feature type="modified residue" description="Phosphoserine" evidence="2">
    <location>
        <position position="740"/>
    </location>
</feature>
<feature type="splice variant" id="VSP_034202" description="In isoform 2." evidence="4">
    <location>
        <begin position="1"/>
        <end position="119"/>
    </location>
</feature>
<feature type="splice variant" id="VSP_034203" description="In isoform 2." evidence="4">
    <original>FQCQGRFSTRSPLELQMQEGEHTVRAIIERVRLPVNVLVPSRPPRNPYDLHPVREGHCYKLV</original>
    <variation>LQCLLGVAAAAASSQAALRCCPTFPSCSLSTRPAPVSPIIPLACRMGELLPWSLAFHFSFVF</variation>
    <location>
        <begin position="228"/>
        <end position="289"/>
    </location>
</feature>
<feature type="splice variant" id="VSP_034204" description="In isoform 2." evidence="4">
    <location>
        <begin position="290"/>
        <end position="880"/>
    </location>
</feature>
<name>GARE2_MOUSE</name>
<organism>
    <name type="scientific">Mus musculus</name>
    <name type="common">Mouse</name>
    <dbReference type="NCBI Taxonomy" id="10090"/>
    <lineage>
        <taxon>Eukaryota</taxon>
        <taxon>Metazoa</taxon>
        <taxon>Chordata</taxon>
        <taxon>Craniata</taxon>
        <taxon>Vertebrata</taxon>
        <taxon>Euteleostomi</taxon>
        <taxon>Mammalia</taxon>
        <taxon>Eutheria</taxon>
        <taxon>Euarchontoglires</taxon>
        <taxon>Glires</taxon>
        <taxon>Rodentia</taxon>
        <taxon>Myomorpha</taxon>
        <taxon>Muroidea</taxon>
        <taxon>Muridae</taxon>
        <taxon>Murinae</taxon>
        <taxon>Mus</taxon>
        <taxon>Mus</taxon>
    </lineage>
</organism>
<accession>Q6PAJ3</accession>
<accession>Q14CH4</accession>
<proteinExistence type="evidence at transcript level"/>
<protein>
    <recommendedName>
        <fullName>GRB2-associated and regulator of MAPK protein 2</fullName>
    </recommendedName>
    <alternativeName>
        <fullName>GRB2-associated and regulator of MAPK1-like</fullName>
    </alternativeName>
</protein>
<dbReference type="EMBL" id="AC112933">
    <property type="status" value="NOT_ANNOTATED_CDS"/>
    <property type="molecule type" value="Genomic_DNA"/>
</dbReference>
<dbReference type="EMBL" id="BC060268">
    <property type="protein sequence ID" value="AAH60268.1"/>
    <property type="molecule type" value="mRNA"/>
</dbReference>
<dbReference type="EMBL" id="BC113782">
    <property type="protein sequence ID" value="AAI13783.1"/>
    <property type="molecule type" value="mRNA"/>
</dbReference>
<dbReference type="EMBL" id="BC113783">
    <property type="protein sequence ID" value="AAI13784.1"/>
    <property type="molecule type" value="mRNA"/>
</dbReference>
<dbReference type="CCDS" id="CCDS51449.1">
    <molecule id="Q6PAJ3-1"/>
</dbReference>
<dbReference type="RefSeq" id="NP_001161351.1">
    <molecule id="Q6PAJ3-1"/>
    <property type="nucleotide sequence ID" value="NM_001167879.1"/>
</dbReference>
<dbReference type="SMR" id="Q6PAJ3"/>
<dbReference type="BioGRID" id="232473">
    <property type="interactions" value="2"/>
</dbReference>
<dbReference type="FunCoup" id="Q6PAJ3">
    <property type="interactions" value="135"/>
</dbReference>
<dbReference type="STRING" id="10090.ENSMUSP00000054208"/>
<dbReference type="iPTMnet" id="Q6PAJ3"/>
<dbReference type="PhosphoSitePlus" id="Q6PAJ3"/>
<dbReference type="jPOST" id="Q6PAJ3"/>
<dbReference type="PaxDb" id="10090-ENSMUSP00000054208"/>
<dbReference type="ProteomicsDB" id="273031">
    <molecule id="Q6PAJ3-1"/>
</dbReference>
<dbReference type="ProteomicsDB" id="273032">
    <molecule id="Q6PAJ3-2"/>
</dbReference>
<dbReference type="Antibodypedia" id="57056">
    <property type="antibodies" value="65 antibodies from 19 providers"/>
</dbReference>
<dbReference type="Ensembl" id="ENSMUST00000058045.5">
    <molecule id="Q6PAJ3-1"/>
    <property type="protein sequence ID" value="ENSMUSP00000054208.5"/>
    <property type="gene ID" value="ENSMUSG00000044576.7"/>
</dbReference>
<dbReference type="GeneID" id="242915"/>
<dbReference type="KEGG" id="mmu:242915"/>
<dbReference type="UCSC" id="uc012dtz.1">
    <molecule id="Q6PAJ3-1"/>
    <property type="organism name" value="mouse"/>
</dbReference>
<dbReference type="AGR" id="MGI:2685290"/>
<dbReference type="CTD" id="150946"/>
<dbReference type="MGI" id="MGI:2685290">
    <property type="gene designation" value="Garem2"/>
</dbReference>
<dbReference type="VEuPathDB" id="HostDB:ENSMUSG00000044576"/>
<dbReference type="eggNOG" id="ENOG502QQU8">
    <property type="taxonomic scope" value="Eukaryota"/>
</dbReference>
<dbReference type="GeneTree" id="ENSGT00530000063834"/>
<dbReference type="HOGENOM" id="CLU_014784_0_0_1"/>
<dbReference type="InParanoid" id="Q6PAJ3"/>
<dbReference type="OMA" id="CLPACAR"/>
<dbReference type="OrthoDB" id="6077228at2759"/>
<dbReference type="PhylomeDB" id="Q6PAJ3"/>
<dbReference type="TreeFam" id="TF329726"/>
<dbReference type="BioGRID-ORCS" id="242915">
    <property type="hits" value="2 hits in 78 CRISPR screens"/>
</dbReference>
<dbReference type="PRO" id="PR:Q6PAJ3"/>
<dbReference type="Proteomes" id="UP000000589">
    <property type="component" value="Chromosome 5"/>
</dbReference>
<dbReference type="RNAct" id="Q6PAJ3">
    <property type="molecule type" value="protein"/>
</dbReference>
<dbReference type="Bgee" id="ENSMUSG00000044576">
    <property type="expression patterns" value="Expressed in ventricular zone and 69 other cell types or tissues"/>
</dbReference>
<dbReference type="GO" id="GO:0050890">
    <property type="term" value="P:cognition"/>
    <property type="evidence" value="ECO:0000315"/>
    <property type="project" value="MGI"/>
</dbReference>
<dbReference type="GO" id="GO:1990138">
    <property type="term" value="P:neuron projection extension"/>
    <property type="evidence" value="ECO:0000315"/>
    <property type="project" value="MGI"/>
</dbReference>
<dbReference type="GO" id="GO:0006950">
    <property type="term" value="P:response to stress"/>
    <property type="evidence" value="ECO:0000315"/>
    <property type="project" value="MGI"/>
</dbReference>
<dbReference type="GO" id="GO:0035176">
    <property type="term" value="P:social behavior"/>
    <property type="evidence" value="ECO:0000315"/>
    <property type="project" value="MGI"/>
</dbReference>
<dbReference type="CDD" id="cd09525">
    <property type="entry name" value="SAM_GAREM"/>
    <property type="match status" value="1"/>
</dbReference>
<dbReference type="Gene3D" id="1.10.150.50">
    <property type="entry name" value="Transcription Factor, Ets-1"/>
    <property type="match status" value="1"/>
</dbReference>
<dbReference type="InterPro" id="IPR025946">
    <property type="entry name" value="CABIT_dom"/>
</dbReference>
<dbReference type="InterPro" id="IPR052281">
    <property type="entry name" value="GAREM"/>
</dbReference>
<dbReference type="InterPro" id="IPR013761">
    <property type="entry name" value="SAM/pointed_sf"/>
</dbReference>
<dbReference type="PANTHER" id="PTHR14454:SF5">
    <property type="entry name" value="GRB2-ASSOCIATED AND REGULATOR OF MAPK PROTEIN 2"/>
    <property type="match status" value="1"/>
</dbReference>
<dbReference type="PANTHER" id="PTHR14454">
    <property type="entry name" value="GRB2-ASSOCIATED AND REGULATOR OF MAPK PROTEIN FAMILY MEMBER"/>
    <property type="match status" value="1"/>
</dbReference>
<dbReference type="Pfam" id="PF12736">
    <property type="entry name" value="CABIT"/>
    <property type="match status" value="1"/>
</dbReference>
<dbReference type="SUPFAM" id="SSF47769">
    <property type="entry name" value="SAM/Pointed domain"/>
    <property type="match status" value="1"/>
</dbReference>
<reference key="1">
    <citation type="journal article" date="2009" name="PLoS Biol.">
        <title>Lineage-specific biology revealed by a finished genome assembly of the mouse.</title>
        <authorList>
            <person name="Church D.M."/>
            <person name="Goodstadt L."/>
            <person name="Hillier L.W."/>
            <person name="Zody M.C."/>
            <person name="Goldstein S."/>
            <person name="She X."/>
            <person name="Bult C.J."/>
            <person name="Agarwala R."/>
            <person name="Cherry J.L."/>
            <person name="DiCuccio M."/>
            <person name="Hlavina W."/>
            <person name="Kapustin Y."/>
            <person name="Meric P."/>
            <person name="Maglott D."/>
            <person name="Birtle Z."/>
            <person name="Marques A.C."/>
            <person name="Graves T."/>
            <person name="Zhou S."/>
            <person name="Teague B."/>
            <person name="Potamousis K."/>
            <person name="Churas C."/>
            <person name="Place M."/>
            <person name="Herschleb J."/>
            <person name="Runnheim R."/>
            <person name="Forrest D."/>
            <person name="Amos-Landgraf J."/>
            <person name="Schwartz D.C."/>
            <person name="Cheng Z."/>
            <person name="Lindblad-Toh K."/>
            <person name="Eichler E.E."/>
            <person name="Ponting C.P."/>
        </authorList>
    </citation>
    <scope>NUCLEOTIDE SEQUENCE [LARGE SCALE GENOMIC DNA]</scope>
    <source>
        <strain>C57BL/6J</strain>
    </source>
</reference>
<reference key="2">
    <citation type="journal article" date="2004" name="Genome Res.">
        <title>The status, quality, and expansion of the NIH full-length cDNA project: the Mammalian Gene Collection (MGC).</title>
        <authorList>
            <consortium name="The MGC Project Team"/>
        </authorList>
    </citation>
    <scope>NUCLEOTIDE SEQUENCE [LARGE SCALE MRNA] (ISOFORM 2)</scope>
    <scope>NUCLEOTIDE SEQUENCE [LARGE SCALE MRNA] OF 41-880 (ISOFORM 1)</scope>
    <source>
        <strain>C57BL/6J</strain>
    </source>
</reference>
<gene>
    <name type="primary">Garem2</name>
    <name type="synonym">Fam59b</name>
    <name type="synonym">Gareml</name>
    <name type="synonym">Gm444</name>
</gene>